<dbReference type="EMBL" id="CP000416">
    <property type="protein sequence ID" value="ABJ64748.1"/>
    <property type="molecule type" value="Genomic_DNA"/>
</dbReference>
<dbReference type="RefSeq" id="WP_011668482.1">
    <property type="nucleotide sequence ID" value="NC_008497.1"/>
</dbReference>
<dbReference type="SMR" id="Q03PX4"/>
<dbReference type="STRING" id="387344.LVIS_1673"/>
<dbReference type="GeneID" id="56993534"/>
<dbReference type="KEGG" id="lbr:LVIS_1673"/>
<dbReference type="eggNOG" id="COG0098">
    <property type="taxonomic scope" value="Bacteria"/>
</dbReference>
<dbReference type="HOGENOM" id="CLU_065898_2_2_9"/>
<dbReference type="Proteomes" id="UP000001652">
    <property type="component" value="Chromosome"/>
</dbReference>
<dbReference type="GO" id="GO:0015935">
    <property type="term" value="C:small ribosomal subunit"/>
    <property type="evidence" value="ECO:0007669"/>
    <property type="project" value="InterPro"/>
</dbReference>
<dbReference type="GO" id="GO:0019843">
    <property type="term" value="F:rRNA binding"/>
    <property type="evidence" value="ECO:0007669"/>
    <property type="project" value="UniProtKB-UniRule"/>
</dbReference>
<dbReference type="GO" id="GO:0003735">
    <property type="term" value="F:structural constituent of ribosome"/>
    <property type="evidence" value="ECO:0007669"/>
    <property type="project" value="InterPro"/>
</dbReference>
<dbReference type="GO" id="GO:0006412">
    <property type="term" value="P:translation"/>
    <property type="evidence" value="ECO:0007669"/>
    <property type="project" value="UniProtKB-UniRule"/>
</dbReference>
<dbReference type="FunFam" id="3.30.160.20:FF:000001">
    <property type="entry name" value="30S ribosomal protein S5"/>
    <property type="match status" value="1"/>
</dbReference>
<dbReference type="FunFam" id="3.30.230.10:FF:000002">
    <property type="entry name" value="30S ribosomal protein S5"/>
    <property type="match status" value="1"/>
</dbReference>
<dbReference type="Gene3D" id="3.30.160.20">
    <property type="match status" value="1"/>
</dbReference>
<dbReference type="Gene3D" id="3.30.230.10">
    <property type="match status" value="1"/>
</dbReference>
<dbReference type="HAMAP" id="MF_01307_B">
    <property type="entry name" value="Ribosomal_uS5_B"/>
    <property type="match status" value="1"/>
</dbReference>
<dbReference type="InterPro" id="IPR020568">
    <property type="entry name" value="Ribosomal_Su5_D2-typ_SF"/>
</dbReference>
<dbReference type="InterPro" id="IPR000851">
    <property type="entry name" value="Ribosomal_uS5"/>
</dbReference>
<dbReference type="InterPro" id="IPR005712">
    <property type="entry name" value="Ribosomal_uS5_bac-type"/>
</dbReference>
<dbReference type="InterPro" id="IPR005324">
    <property type="entry name" value="Ribosomal_uS5_C"/>
</dbReference>
<dbReference type="InterPro" id="IPR013810">
    <property type="entry name" value="Ribosomal_uS5_N"/>
</dbReference>
<dbReference type="InterPro" id="IPR018192">
    <property type="entry name" value="Ribosomal_uS5_N_CS"/>
</dbReference>
<dbReference type="InterPro" id="IPR014721">
    <property type="entry name" value="Ribsml_uS5_D2-typ_fold_subgr"/>
</dbReference>
<dbReference type="NCBIfam" id="TIGR01021">
    <property type="entry name" value="rpsE_bact"/>
    <property type="match status" value="1"/>
</dbReference>
<dbReference type="PANTHER" id="PTHR48277">
    <property type="entry name" value="MITOCHONDRIAL RIBOSOMAL PROTEIN S5"/>
    <property type="match status" value="1"/>
</dbReference>
<dbReference type="PANTHER" id="PTHR48277:SF1">
    <property type="entry name" value="MITOCHONDRIAL RIBOSOMAL PROTEIN S5"/>
    <property type="match status" value="1"/>
</dbReference>
<dbReference type="Pfam" id="PF00333">
    <property type="entry name" value="Ribosomal_S5"/>
    <property type="match status" value="1"/>
</dbReference>
<dbReference type="Pfam" id="PF03719">
    <property type="entry name" value="Ribosomal_S5_C"/>
    <property type="match status" value="1"/>
</dbReference>
<dbReference type="SUPFAM" id="SSF54768">
    <property type="entry name" value="dsRNA-binding domain-like"/>
    <property type="match status" value="1"/>
</dbReference>
<dbReference type="SUPFAM" id="SSF54211">
    <property type="entry name" value="Ribosomal protein S5 domain 2-like"/>
    <property type="match status" value="1"/>
</dbReference>
<dbReference type="PROSITE" id="PS00585">
    <property type="entry name" value="RIBOSOMAL_S5"/>
    <property type="match status" value="1"/>
</dbReference>
<dbReference type="PROSITE" id="PS50881">
    <property type="entry name" value="S5_DSRBD"/>
    <property type="match status" value="1"/>
</dbReference>
<name>RS5_LEVBA</name>
<gene>
    <name evidence="1" type="primary">rpsE</name>
    <name type="ordered locus">LVIS_1673</name>
</gene>
<sequence>MAKFIDPDKLELEDNVVAINRITKVVKGGRRLRFAALVIVGDKNGHVGFGTGKAQEVPEAIRKAVEAARKNLIEVPIVGTTIPHEVLGTFGGGKIMLKPAAEGSGVTAGGAVRSVMELAGVADVTSKRLGSNTPVNAVRATFDGLTQLKRAEEVAALRGVSLQHLAE</sequence>
<comment type="function">
    <text evidence="1">With S4 and S12 plays an important role in translational accuracy.</text>
</comment>
<comment type="function">
    <text evidence="1">Located at the back of the 30S subunit body where it stabilizes the conformation of the head with respect to the body.</text>
</comment>
<comment type="subunit">
    <text evidence="1">Part of the 30S ribosomal subunit. Contacts proteins S4 and S8.</text>
</comment>
<comment type="domain">
    <text>The N-terminal domain interacts with the head of the 30S subunit; the C-terminal domain interacts with the body and contacts protein S4. The interaction surface between S4 and S5 is involved in control of translational fidelity.</text>
</comment>
<comment type="similarity">
    <text evidence="1">Belongs to the universal ribosomal protein uS5 family.</text>
</comment>
<protein>
    <recommendedName>
        <fullName evidence="1">Small ribosomal subunit protein uS5</fullName>
    </recommendedName>
    <alternativeName>
        <fullName evidence="2">30S ribosomal protein S5</fullName>
    </alternativeName>
</protein>
<keyword id="KW-1185">Reference proteome</keyword>
<keyword id="KW-0687">Ribonucleoprotein</keyword>
<keyword id="KW-0689">Ribosomal protein</keyword>
<keyword id="KW-0694">RNA-binding</keyword>
<keyword id="KW-0699">rRNA-binding</keyword>
<feature type="chain" id="PRO_0000323138" description="Small ribosomal subunit protein uS5">
    <location>
        <begin position="1"/>
        <end position="167"/>
    </location>
</feature>
<feature type="domain" description="S5 DRBM" evidence="1">
    <location>
        <begin position="12"/>
        <end position="75"/>
    </location>
</feature>
<evidence type="ECO:0000255" key="1">
    <source>
        <dbReference type="HAMAP-Rule" id="MF_01307"/>
    </source>
</evidence>
<evidence type="ECO:0000305" key="2"/>
<organism>
    <name type="scientific">Levilactobacillus brevis (strain ATCC 367 / BCRC 12310 / CIP 105137 / JCM 1170 / LMG 11437 / NCIMB 947 / NCTC 947)</name>
    <name type="common">Lactobacillus brevis</name>
    <dbReference type="NCBI Taxonomy" id="387344"/>
    <lineage>
        <taxon>Bacteria</taxon>
        <taxon>Bacillati</taxon>
        <taxon>Bacillota</taxon>
        <taxon>Bacilli</taxon>
        <taxon>Lactobacillales</taxon>
        <taxon>Lactobacillaceae</taxon>
        <taxon>Levilactobacillus</taxon>
    </lineage>
</organism>
<proteinExistence type="inferred from homology"/>
<accession>Q03PX4</accession>
<reference key="1">
    <citation type="journal article" date="2006" name="Proc. Natl. Acad. Sci. U.S.A.">
        <title>Comparative genomics of the lactic acid bacteria.</title>
        <authorList>
            <person name="Makarova K.S."/>
            <person name="Slesarev A."/>
            <person name="Wolf Y.I."/>
            <person name="Sorokin A."/>
            <person name="Mirkin B."/>
            <person name="Koonin E.V."/>
            <person name="Pavlov A."/>
            <person name="Pavlova N."/>
            <person name="Karamychev V."/>
            <person name="Polouchine N."/>
            <person name="Shakhova V."/>
            <person name="Grigoriev I."/>
            <person name="Lou Y."/>
            <person name="Rohksar D."/>
            <person name="Lucas S."/>
            <person name="Huang K."/>
            <person name="Goodstein D.M."/>
            <person name="Hawkins T."/>
            <person name="Plengvidhya V."/>
            <person name="Welker D."/>
            <person name="Hughes J."/>
            <person name="Goh Y."/>
            <person name="Benson A."/>
            <person name="Baldwin K."/>
            <person name="Lee J.-H."/>
            <person name="Diaz-Muniz I."/>
            <person name="Dosti B."/>
            <person name="Smeianov V."/>
            <person name="Wechter W."/>
            <person name="Barabote R."/>
            <person name="Lorca G."/>
            <person name="Altermann E."/>
            <person name="Barrangou R."/>
            <person name="Ganesan B."/>
            <person name="Xie Y."/>
            <person name="Rawsthorne H."/>
            <person name="Tamir D."/>
            <person name="Parker C."/>
            <person name="Breidt F."/>
            <person name="Broadbent J.R."/>
            <person name="Hutkins R."/>
            <person name="O'Sullivan D."/>
            <person name="Steele J."/>
            <person name="Unlu G."/>
            <person name="Saier M.H. Jr."/>
            <person name="Klaenhammer T."/>
            <person name="Richardson P."/>
            <person name="Kozyavkin S."/>
            <person name="Weimer B.C."/>
            <person name="Mills D.A."/>
        </authorList>
    </citation>
    <scope>NUCLEOTIDE SEQUENCE [LARGE SCALE GENOMIC DNA]</scope>
    <source>
        <strain>ATCC 367 / BCRC 12310 / CIP 105137 / JCM 1170 / LMG 11437 / NCIMB 947 / NCTC 947</strain>
    </source>
</reference>